<reference key="1">
    <citation type="journal article" date="2009" name="Science">
        <title>The dynamics and time scale of ongoing genomic erosion in symbiotic bacteria.</title>
        <authorList>
            <person name="Moran N.A."/>
            <person name="McLaughlin H.J."/>
            <person name="Sorek R."/>
        </authorList>
    </citation>
    <scope>NUCLEOTIDE SEQUENCE [LARGE SCALE GENOMIC DNA]</scope>
    <source>
        <strain>5A</strain>
    </source>
</reference>
<comment type="function">
    <text evidence="1">Hydrolyzes ribosome-free peptidyl-tRNAs (with 1 or more amino acids incorporated), which drop off the ribosome during protein synthesis, or as a result of ribosome stalling.</text>
</comment>
<comment type="function">
    <text evidence="1">Catalyzes the release of premature peptidyl moieties from peptidyl-tRNA molecules trapped in stalled 50S ribosomal subunits, and thus maintains levels of free tRNAs and 50S ribosomes.</text>
</comment>
<comment type="catalytic activity">
    <reaction evidence="1">
        <text>an N-acyl-L-alpha-aminoacyl-tRNA + H2O = an N-acyl-L-amino acid + a tRNA + H(+)</text>
        <dbReference type="Rhea" id="RHEA:54448"/>
        <dbReference type="Rhea" id="RHEA-COMP:10123"/>
        <dbReference type="Rhea" id="RHEA-COMP:13883"/>
        <dbReference type="ChEBI" id="CHEBI:15377"/>
        <dbReference type="ChEBI" id="CHEBI:15378"/>
        <dbReference type="ChEBI" id="CHEBI:59874"/>
        <dbReference type="ChEBI" id="CHEBI:78442"/>
        <dbReference type="ChEBI" id="CHEBI:138191"/>
        <dbReference type="EC" id="3.1.1.29"/>
    </reaction>
</comment>
<comment type="subunit">
    <text evidence="1">Monomer.</text>
</comment>
<comment type="subcellular location">
    <subcellularLocation>
        <location evidence="1">Cytoplasm</location>
    </subcellularLocation>
</comment>
<comment type="similarity">
    <text evidence="1">Belongs to the PTH family.</text>
</comment>
<evidence type="ECO:0000255" key="1">
    <source>
        <dbReference type="HAMAP-Rule" id="MF_00083"/>
    </source>
</evidence>
<organism>
    <name type="scientific">Buchnera aphidicola subsp. Acyrthosiphon pisum (strain 5A)</name>
    <dbReference type="NCBI Taxonomy" id="563178"/>
    <lineage>
        <taxon>Bacteria</taxon>
        <taxon>Pseudomonadati</taxon>
        <taxon>Pseudomonadota</taxon>
        <taxon>Gammaproteobacteria</taxon>
        <taxon>Enterobacterales</taxon>
        <taxon>Erwiniaceae</taxon>
        <taxon>Buchnera</taxon>
    </lineage>
</organism>
<feature type="chain" id="PRO_1000118379" description="Peptidyl-tRNA hydrolase">
    <location>
        <begin position="1"/>
        <end position="177"/>
    </location>
</feature>
<feature type="active site" description="Proton acceptor" evidence="1">
    <location>
        <position position="17"/>
    </location>
</feature>
<feature type="binding site" evidence="1">
    <location>
        <position position="12"/>
    </location>
    <ligand>
        <name>tRNA</name>
        <dbReference type="ChEBI" id="CHEBI:17843"/>
    </ligand>
</feature>
<feature type="binding site" evidence="1">
    <location>
        <position position="63"/>
    </location>
    <ligand>
        <name>tRNA</name>
        <dbReference type="ChEBI" id="CHEBI:17843"/>
    </ligand>
</feature>
<feature type="binding site" evidence="1">
    <location>
        <position position="65"/>
    </location>
    <ligand>
        <name>tRNA</name>
        <dbReference type="ChEBI" id="CHEBI:17843"/>
    </ligand>
</feature>
<feature type="binding site" evidence="1">
    <location>
        <position position="111"/>
    </location>
    <ligand>
        <name>tRNA</name>
        <dbReference type="ChEBI" id="CHEBI:17843"/>
    </ligand>
</feature>
<feature type="site" description="Discriminates between blocked and unblocked aminoacyl-tRNA" evidence="1">
    <location>
        <position position="7"/>
    </location>
</feature>
<feature type="site" description="Stabilizes the basic form of H active site to accept a proton" evidence="1">
    <location>
        <position position="90"/>
    </location>
</feature>
<sequence>MIVGLSNPKKEYHSTRHNVGSWYLYSLAESYLRNFKNEKKFFGFTTSLNIESNYIRLLIPNIFMNINGQSVFKMASFYNINLSEILIVHDDLELQPGISKLKYSYGHNGHNGLRDIVNTFNKNINFYRFRIGIGRPINRDQIASFVLSNPTKKEKILIQKSILHAIEKNVLSNILKF</sequence>
<accession>B8D8Y9</accession>
<name>PTH_BUCA5</name>
<proteinExistence type="inferred from homology"/>
<dbReference type="EC" id="3.1.1.29" evidence="1"/>
<dbReference type="EMBL" id="CP001161">
    <property type="protein sequence ID" value="ACL30560.1"/>
    <property type="molecule type" value="Genomic_DNA"/>
</dbReference>
<dbReference type="RefSeq" id="WP_010895991.1">
    <property type="nucleotide sequence ID" value="NC_011833.1"/>
</dbReference>
<dbReference type="SMR" id="B8D8Y9"/>
<dbReference type="KEGG" id="bap:BUAP5A_187"/>
<dbReference type="HOGENOM" id="CLU_062456_3_1_6"/>
<dbReference type="OrthoDB" id="9800507at2"/>
<dbReference type="Proteomes" id="UP000006904">
    <property type="component" value="Chromosome"/>
</dbReference>
<dbReference type="GO" id="GO:0005737">
    <property type="term" value="C:cytoplasm"/>
    <property type="evidence" value="ECO:0007669"/>
    <property type="project" value="UniProtKB-SubCell"/>
</dbReference>
<dbReference type="GO" id="GO:0004045">
    <property type="term" value="F:peptidyl-tRNA hydrolase activity"/>
    <property type="evidence" value="ECO:0007669"/>
    <property type="project" value="UniProtKB-UniRule"/>
</dbReference>
<dbReference type="GO" id="GO:0000049">
    <property type="term" value="F:tRNA binding"/>
    <property type="evidence" value="ECO:0007669"/>
    <property type="project" value="UniProtKB-UniRule"/>
</dbReference>
<dbReference type="GO" id="GO:0006515">
    <property type="term" value="P:protein quality control for misfolded or incompletely synthesized proteins"/>
    <property type="evidence" value="ECO:0007669"/>
    <property type="project" value="UniProtKB-UniRule"/>
</dbReference>
<dbReference type="GO" id="GO:0072344">
    <property type="term" value="P:rescue of stalled ribosome"/>
    <property type="evidence" value="ECO:0007669"/>
    <property type="project" value="UniProtKB-UniRule"/>
</dbReference>
<dbReference type="CDD" id="cd00462">
    <property type="entry name" value="PTH"/>
    <property type="match status" value="1"/>
</dbReference>
<dbReference type="FunFam" id="3.40.50.1470:FF:000001">
    <property type="entry name" value="Peptidyl-tRNA hydrolase"/>
    <property type="match status" value="1"/>
</dbReference>
<dbReference type="Gene3D" id="3.40.50.1470">
    <property type="entry name" value="Peptidyl-tRNA hydrolase"/>
    <property type="match status" value="1"/>
</dbReference>
<dbReference type="HAMAP" id="MF_00083">
    <property type="entry name" value="Pept_tRNA_hydro_bact"/>
    <property type="match status" value="1"/>
</dbReference>
<dbReference type="InterPro" id="IPR001328">
    <property type="entry name" value="Pept_tRNA_hydro"/>
</dbReference>
<dbReference type="InterPro" id="IPR018171">
    <property type="entry name" value="Pept_tRNA_hydro_CS"/>
</dbReference>
<dbReference type="InterPro" id="IPR036416">
    <property type="entry name" value="Pept_tRNA_hydro_sf"/>
</dbReference>
<dbReference type="NCBIfam" id="TIGR00447">
    <property type="entry name" value="pth"/>
    <property type="match status" value="1"/>
</dbReference>
<dbReference type="PANTHER" id="PTHR17224">
    <property type="entry name" value="PEPTIDYL-TRNA HYDROLASE"/>
    <property type="match status" value="1"/>
</dbReference>
<dbReference type="PANTHER" id="PTHR17224:SF1">
    <property type="entry name" value="PEPTIDYL-TRNA HYDROLASE"/>
    <property type="match status" value="1"/>
</dbReference>
<dbReference type="Pfam" id="PF01195">
    <property type="entry name" value="Pept_tRNA_hydro"/>
    <property type="match status" value="1"/>
</dbReference>
<dbReference type="SUPFAM" id="SSF53178">
    <property type="entry name" value="Peptidyl-tRNA hydrolase-like"/>
    <property type="match status" value="1"/>
</dbReference>
<dbReference type="PROSITE" id="PS01196">
    <property type="entry name" value="PEPT_TRNA_HYDROL_2"/>
    <property type="match status" value="1"/>
</dbReference>
<protein>
    <recommendedName>
        <fullName evidence="1">Peptidyl-tRNA hydrolase</fullName>
        <shortName evidence="1">Pth</shortName>
        <ecNumber evidence="1">3.1.1.29</ecNumber>
    </recommendedName>
</protein>
<keyword id="KW-0963">Cytoplasm</keyword>
<keyword id="KW-0378">Hydrolase</keyword>
<keyword id="KW-0694">RNA-binding</keyword>
<keyword id="KW-0820">tRNA-binding</keyword>
<gene>
    <name evidence="1" type="primary">pth</name>
    <name type="ordered locus">BUAP5A_187</name>
</gene>